<keyword id="KW-0030">Aminoacyl-tRNA synthetase</keyword>
<keyword id="KW-0067">ATP-binding</keyword>
<keyword id="KW-0963">Cytoplasm</keyword>
<keyword id="KW-0436">Ligase</keyword>
<keyword id="KW-0547">Nucleotide-binding</keyword>
<keyword id="KW-0648">Protein biosynthesis</keyword>
<keyword id="KW-1185">Reference proteome</keyword>
<name>SYS_TREDE</name>
<dbReference type="EC" id="6.1.1.11" evidence="1"/>
<dbReference type="EMBL" id="AE017226">
    <property type="protein sequence ID" value="AAS12826.1"/>
    <property type="molecule type" value="Genomic_DNA"/>
</dbReference>
<dbReference type="RefSeq" id="NP_972907.1">
    <property type="nucleotide sequence ID" value="NC_002967.9"/>
</dbReference>
<dbReference type="RefSeq" id="WP_002680220.1">
    <property type="nucleotide sequence ID" value="NC_002967.9"/>
</dbReference>
<dbReference type="SMR" id="Q73KB2"/>
<dbReference type="STRING" id="243275.TDE_2307"/>
<dbReference type="PaxDb" id="243275-TDE_2307"/>
<dbReference type="GeneID" id="2740272"/>
<dbReference type="KEGG" id="tde:TDE_2307"/>
<dbReference type="PATRIC" id="fig|243275.7.peg.2177"/>
<dbReference type="eggNOG" id="COG0172">
    <property type="taxonomic scope" value="Bacteria"/>
</dbReference>
<dbReference type="HOGENOM" id="CLU_023797_0_1_12"/>
<dbReference type="OrthoDB" id="9804647at2"/>
<dbReference type="UniPathway" id="UPA00906">
    <property type="reaction ID" value="UER00895"/>
</dbReference>
<dbReference type="Proteomes" id="UP000008212">
    <property type="component" value="Chromosome"/>
</dbReference>
<dbReference type="GO" id="GO:0005737">
    <property type="term" value="C:cytoplasm"/>
    <property type="evidence" value="ECO:0007669"/>
    <property type="project" value="UniProtKB-SubCell"/>
</dbReference>
<dbReference type="GO" id="GO:0005524">
    <property type="term" value="F:ATP binding"/>
    <property type="evidence" value="ECO:0007669"/>
    <property type="project" value="UniProtKB-UniRule"/>
</dbReference>
<dbReference type="GO" id="GO:0004828">
    <property type="term" value="F:serine-tRNA ligase activity"/>
    <property type="evidence" value="ECO:0007669"/>
    <property type="project" value="UniProtKB-UniRule"/>
</dbReference>
<dbReference type="GO" id="GO:0016260">
    <property type="term" value="P:selenocysteine biosynthetic process"/>
    <property type="evidence" value="ECO:0007669"/>
    <property type="project" value="UniProtKB-UniRule"/>
</dbReference>
<dbReference type="GO" id="GO:0006434">
    <property type="term" value="P:seryl-tRNA aminoacylation"/>
    <property type="evidence" value="ECO:0007669"/>
    <property type="project" value="UniProtKB-UniRule"/>
</dbReference>
<dbReference type="CDD" id="cd00770">
    <property type="entry name" value="SerRS_core"/>
    <property type="match status" value="1"/>
</dbReference>
<dbReference type="FunFam" id="3.30.930.10:FF:000055">
    <property type="entry name" value="Serine--tRNA ligase"/>
    <property type="match status" value="1"/>
</dbReference>
<dbReference type="Gene3D" id="3.30.930.10">
    <property type="entry name" value="Bira Bifunctional Protein, Domain 2"/>
    <property type="match status" value="1"/>
</dbReference>
<dbReference type="Gene3D" id="1.10.287.40">
    <property type="entry name" value="Serine-tRNA synthetase, tRNA binding domain"/>
    <property type="match status" value="1"/>
</dbReference>
<dbReference type="HAMAP" id="MF_00176">
    <property type="entry name" value="Ser_tRNA_synth_type1"/>
    <property type="match status" value="1"/>
</dbReference>
<dbReference type="InterPro" id="IPR002314">
    <property type="entry name" value="aa-tRNA-synt_IIb"/>
</dbReference>
<dbReference type="InterPro" id="IPR006195">
    <property type="entry name" value="aa-tRNA-synth_II"/>
</dbReference>
<dbReference type="InterPro" id="IPR045864">
    <property type="entry name" value="aa-tRNA-synth_II/BPL/LPL"/>
</dbReference>
<dbReference type="InterPro" id="IPR002317">
    <property type="entry name" value="Ser-tRNA-ligase_type_1"/>
</dbReference>
<dbReference type="InterPro" id="IPR015866">
    <property type="entry name" value="Ser-tRNA-synth_1_N"/>
</dbReference>
<dbReference type="InterPro" id="IPR042103">
    <property type="entry name" value="SerRS_1_N_sf"/>
</dbReference>
<dbReference type="InterPro" id="IPR033729">
    <property type="entry name" value="SerRS_core"/>
</dbReference>
<dbReference type="InterPro" id="IPR010978">
    <property type="entry name" value="tRNA-bd_arm"/>
</dbReference>
<dbReference type="NCBIfam" id="TIGR00414">
    <property type="entry name" value="serS"/>
    <property type="match status" value="1"/>
</dbReference>
<dbReference type="PANTHER" id="PTHR11778">
    <property type="entry name" value="SERYL-TRNA SYNTHETASE"/>
    <property type="match status" value="1"/>
</dbReference>
<dbReference type="Pfam" id="PF02403">
    <property type="entry name" value="Seryl_tRNA_N"/>
    <property type="match status" value="1"/>
</dbReference>
<dbReference type="Pfam" id="PF00587">
    <property type="entry name" value="tRNA-synt_2b"/>
    <property type="match status" value="1"/>
</dbReference>
<dbReference type="PIRSF" id="PIRSF001529">
    <property type="entry name" value="Ser-tRNA-synth_IIa"/>
    <property type="match status" value="1"/>
</dbReference>
<dbReference type="PRINTS" id="PR00981">
    <property type="entry name" value="TRNASYNTHSER"/>
</dbReference>
<dbReference type="SUPFAM" id="SSF55681">
    <property type="entry name" value="Class II aaRS and biotin synthetases"/>
    <property type="match status" value="1"/>
</dbReference>
<dbReference type="SUPFAM" id="SSF46589">
    <property type="entry name" value="tRNA-binding arm"/>
    <property type="match status" value="1"/>
</dbReference>
<dbReference type="PROSITE" id="PS50862">
    <property type="entry name" value="AA_TRNA_LIGASE_II"/>
    <property type="match status" value="1"/>
</dbReference>
<sequence>MLDYKFIKENVEAVKQNIKNRHMNADADKAVELYDKRTALVTSLQNLQKDRNDNSQSMKQKLSPEERQKLVDQGKAIKEKIAQVEAELAEAEKALHEAVSKIPNMAHPEAPVGKEDSDNLEVKRCGTVPKFDFEPKDHVQLGQDLDLIDFEAGTKVSGVKFYFLKNEAVFLEQALTMYGLNILRKHGFKPFITPDIAKEEILYGIGFNPRGEESNVYSLEGEGTCLVATAEITLGGYHSDEIIKKESLPLKYCGLSHCFRREAGAAGQFSKGLYRVHQFSKLEMFVYCTPEESDALHEELRLIEEEIFNGLGIPFRVVDTCTGDLGAPAYRKWDLEAWMPGRNGGEWGEVTSTSNCTDYQARRLNIRYKDDDGKNKFLHTLNGTALAMSRAMIAVLENYQQADGSIKIPEALVPYCGFDRIG</sequence>
<feature type="chain" id="PRO_0000122148" description="Serine--tRNA ligase">
    <location>
        <begin position="1"/>
        <end position="422"/>
    </location>
</feature>
<feature type="binding site" evidence="1">
    <location>
        <begin position="229"/>
        <end position="231"/>
    </location>
    <ligand>
        <name>L-serine</name>
        <dbReference type="ChEBI" id="CHEBI:33384"/>
    </ligand>
</feature>
<feature type="binding site" evidence="1">
    <location>
        <begin position="260"/>
        <end position="262"/>
    </location>
    <ligand>
        <name>ATP</name>
        <dbReference type="ChEBI" id="CHEBI:30616"/>
    </ligand>
</feature>
<feature type="binding site" evidence="1">
    <location>
        <position position="276"/>
    </location>
    <ligand>
        <name>ATP</name>
        <dbReference type="ChEBI" id="CHEBI:30616"/>
    </ligand>
</feature>
<feature type="binding site" evidence="1">
    <location>
        <position position="283"/>
    </location>
    <ligand>
        <name>L-serine</name>
        <dbReference type="ChEBI" id="CHEBI:33384"/>
    </ligand>
</feature>
<feature type="binding site" evidence="1">
    <location>
        <begin position="349"/>
        <end position="352"/>
    </location>
    <ligand>
        <name>ATP</name>
        <dbReference type="ChEBI" id="CHEBI:30616"/>
    </ligand>
</feature>
<feature type="binding site" evidence="1">
    <location>
        <position position="384"/>
    </location>
    <ligand>
        <name>L-serine</name>
        <dbReference type="ChEBI" id="CHEBI:33384"/>
    </ligand>
</feature>
<comment type="function">
    <text evidence="1">Catalyzes the attachment of serine to tRNA(Ser). Is also able to aminoacylate tRNA(Sec) with serine, to form the misacylated tRNA L-seryl-tRNA(Sec), which will be further converted into selenocysteinyl-tRNA(Sec).</text>
</comment>
<comment type="catalytic activity">
    <reaction evidence="1">
        <text>tRNA(Ser) + L-serine + ATP = L-seryl-tRNA(Ser) + AMP + diphosphate + H(+)</text>
        <dbReference type="Rhea" id="RHEA:12292"/>
        <dbReference type="Rhea" id="RHEA-COMP:9669"/>
        <dbReference type="Rhea" id="RHEA-COMP:9703"/>
        <dbReference type="ChEBI" id="CHEBI:15378"/>
        <dbReference type="ChEBI" id="CHEBI:30616"/>
        <dbReference type="ChEBI" id="CHEBI:33019"/>
        <dbReference type="ChEBI" id="CHEBI:33384"/>
        <dbReference type="ChEBI" id="CHEBI:78442"/>
        <dbReference type="ChEBI" id="CHEBI:78533"/>
        <dbReference type="ChEBI" id="CHEBI:456215"/>
        <dbReference type="EC" id="6.1.1.11"/>
    </reaction>
</comment>
<comment type="catalytic activity">
    <reaction evidence="1">
        <text>tRNA(Sec) + L-serine + ATP = L-seryl-tRNA(Sec) + AMP + diphosphate + H(+)</text>
        <dbReference type="Rhea" id="RHEA:42580"/>
        <dbReference type="Rhea" id="RHEA-COMP:9742"/>
        <dbReference type="Rhea" id="RHEA-COMP:10128"/>
        <dbReference type="ChEBI" id="CHEBI:15378"/>
        <dbReference type="ChEBI" id="CHEBI:30616"/>
        <dbReference type="ChEBI" id="CHEBI:33019"/>
        <dbReference type="ChEBI" id="CHEBI:33384"/>
        <dbReference type="ChEBI" id="CHEBI:78442"/>
        <dbReference type="ChEBI" id="CHEBI:78533"/>
        <dbReference type="ChEBI" id="CHEBI:456215"/>
        <dbReference type="EC" id="6.1.1.11"/>
    </reaction>
</comment>
<comment type="pathway">
    <text evidence="1">Aminoacyl-tRNA biosynthesis; selenocysteinyl-tRNA(Sec) biosynthesis; L-seryl-tRNA(Sec) from L-serine and tRNA(Sec): step 1/1.</text>
</comment>
<comment type="subunit">
    <text evidence="1">Homodimer. The tRNA molecule binds across the dimer.</text>
</comment>
<comment type="subcellular location">
    <subcellularLocation>
        <location evidence="1">Cytoplasm</location>
    </subcellularLocation>
</comment>
<comment type="domain">
    <text evidence="1">Consists of two distinct domains, a catalytic core and a N-terminal extension that is involved in tRNA binding.</text>
</comment>
<comment type="similarity">
    <text evidence="1">Belongs to the class-II aminoacyl-tRNA synthetase family. Type-1 seryl-tRNA synthetase subfamily.</text>
</comment>
<accession>Q73KB2</accession>
<evidence type="ECO:0000255" key="1">
    <source>
        <dbReference type="HAMAP-Rule" id="MF_00176"/>
    </source>
</evidence>
<proteinExistence type="inferred from homology"/>
<organism>
    <name type="scientific">Treponema denticola (strain ATCC 35405 / DSM 14222 / CIP 103919 / JCM 8153 / KCTC 15104)</name>
    <dbReference type="NCBI Taxonomy" id="243275"/>
    <lineage>
        <taxon>Bacteria</taxon>
        <taxon>Pseudomonadati</taxon>
        <taxon>Spirochaetota</taxon>
        <taxon>Spirochaetia</taxon>
        <taxon>Spirochaetales</taxon>
        <taxon>Treponemataceae</taxon>
        <taxon>Treponema</taxon>
    </lineage>
</organism>
<gene>
    <name evidence="1" type="primary">serS</name>
    <name type="ordered locus">TDE_2307</name>
</gene>
<protein>
    <recommendedName>
        <fullName evidence="1">Serine--tRNA ligase</fullName>
        <ecNumber evidence="1">6.1.1.11</ecNumber>
    </recommendedName>
    <alternativeName>
        <fullName evidence="1">Seryl-tRNA synthetase</fullName>
        <shortName evidence="1">SerRS</shortName>
    </alternativeName>
    <alternativeName>
        <fullName evidence="1">Seryl-tRNA(Ser/Sec) synthetase</fullName>
    </alternativeName>
</protein>
<reference key="1">
    <citation type="journal article" date="2004" name="Proc. Natl. Acad. Sci. U.S.A.">
        <title>Comparison of the genome of the oral pathogen Treponema denticola with other spirochete genomes.</title>
        <authorList>
            <person name="Seshadri R."/>
            <person name="Myers G.S.A."/>
            <person name="Tettelin H."/>
            <person name="Eisen J.A."/>
            <person name="Heidelberg J.F."/>
            <person name="Dodson R.J."/>
            <person name="Davidsen T.M."/>
            <person name="DeBoy R.T."/>
            <person name="Fouts D.E."/>
            <person name="Haft D.H."/>
            <person name="Selengut J."/>
            <person name="Ren Q."/>
            <person name="Brinkac L.M."/>
            <person name="Madupu R."/>
            <person name="Kolonay J.F."/>
            <person name="Durkin S.A."/>
            <person name="Daugherty S.C."/>
            <person name="Shetty J."/>
            <person name="Shvartsbeyn A."/>
            <person name="Gebregeorgis E."/>
            <person name="Geer K."/>
            <person name="Tsegaye G."/>
            <person name="Malek J.A."/>
            <person name="Ayodeji B."/>
            <person name="Shatsman S."/>
            <person name="McLeod M.P."/>
            <person name="Smajs D."/>
            <person name="Howell J.K."/>
            <person name="Pal S."/>
            <person name="Amin A."/>
            <person name="Vashisth P."/>
            <person name="McNeill T.Z."/>
            <person name="Xiang Q."/>
            <person name="Sodergren E."/>
            <person name="Baca E."/>
            <person name="Weinstock G.M."/>
            <person name="Norris S.J."/>
            <person name="Fraser C.M."/>
            <person name="Paulsen I.T."/>
        </authorList>
    </citation>
    <scope>NUCLEOTIDE SEQUENCE [LARGE SCALE GENOMIC DNA]</scope>
    <source>
        <strain>ATCC 35405 / DSM 14222 / CIP 103919 / JCM 8153 / KCTC 15104</strain>
    </source>
</reference>